<reference key="1">
    <citation type="submission" date="2009-02" db="EMBL/GenBank/DDBJ databases">
        <title>Vibrio splendidus str. LGP32 complete genome.</title>
        <authorList>
            <person name="Mazel D."/>
            <person name="Le Roux F."/>
        </authorList>
    </citation>
    <scope>NUCLEOTIDE SEQUENCE [LARGE SCALE GENOMIC DNA]</scope>
    <source>
        <strain>LGP32</strain>
    </source>
</reference>
<comment type="function">
    <text evidence="1">Involved in protein export. Acts as a chaperone by maintaining the newly synthesized protein in an open conformation. Functions as a peptidyl-prolyl cis-trans isomerase.</text>
</comment>
<comment type="catalytic activity">
    <reaction evidence="1">
        <text>[protein]-peptidylproline (omega=180) = [protein]-peptidylproline (omega=0)</text>
        <dbReference type="Rhea" id="RHEA:16237"/>
        <dbReference type="Rhea" id="RHEA-COMP:10747"/>
        <dbReference type="Rhea" id="RHEA-COMP:10748"/>
        <dbReference type="ChEBI" id="CHEBI:83833"/>
        <dbReference type="ChEBI" id="CHEBI:83834"/>
        <dbReference type="EC" id="5.2.1.8"/>
    </reaction>
</comment>
<comment type="subcellular location">
    <subcellularLocation>
        <location>Cytoplasm</location>
    </subcellularLocation>
    <text evidence="1">About half TF is bound to the ribosome near the polypeptide exit tunnel while the other half is free in the cytoplasm.</text>
</comment>
<comment type="domain">
    <text evidence="1">Consists of 3 domains; the N-terminus binds the ribosome, the middle domain has PPIase activity, while the C-terminus has intrinsic chaperone activity on its own.</text>
</comment>
<comment type="similarity">
    <text evidence="1">Belongs to the FKBP-type PPIase family. Tig subfamily.</text>
</comment>
<evidence type="ECO:0000255" key="1">
    <source>
        <dbReference type="HAMAP-Rule" id="MF_00303"/>
    </source>
</evidence>
<accession>B7VI01</accession>
<proteinExistence type="inferred from homology"/>
<protein>
    <recommendedName>
        <fullName evidence="1">Trigger factor</fullName>
        <shortName evidence="1">TF</shortName>
        <ecNumber evidence="1">5.2.1.8</ecNumber>
    </recommendedName>
    <alternativeName>
        <fullName evidence="1">PPIase</fullName>
    </alternativeName>
</protein>
<gene>
    <name evidence="1" type="primary">tig</name>
    <name type="ordered locus">VS_2206</name>
</gene>
<name>TIG_VIBA3</name>
<sequence>MQVTVETLEGLERRLNITVPAANIEDAVTAELRNIAKNRRFDGFRKGKVPMKMVAKMYGKAVRQDVMGEVMQRHFIEAIVKEKINPAGAPTFAPVENNEGADLVFNATFEVYPEVELKGLENITVEKPAVEVKEADVEEMIETLRKQQATWTEVEAAADAGSRATIDFVGSIDGEEFEGGKAENFPLEMGAGRMIPGFEDGIVGKTAGMEFEIEVNFPEDYHAENLKGKAAKFSIKLNKVEARELPELNEEFVSKFGAAEGVEGLKAEVRKNMERELKQAVKNRIKEQAIDGLVNENNIDVPSALIDQEIGVLRQQAAQRFGGNTEAADQLPRELFEEQAKRRVVVGLLLGEVIKTEELKADDEKVKAIIEEMATAYEDPTEVIAYYEQNEQMMNNMRNVALEEQAIDAIIAKAQVSDKEVSFNELMNQQPA</sequence>
<organism>
    <name type="scientific">Vibrio atlanticus (strain LGP32)</name>
    <name type="common">Vibrio splendidus (strain Mel32)</name>
    <dbReference type="NCBI Taxonomy" id="575788"/>
    <lineage>
        <taxon>Bacteria</taxon>
        <taxon>Pseudomonadati</taxon>
        <taxon>Pseudomonadota</taxon>
        <taxon>Gammaproteobacteria</taxon>
        <taxon>Vibrionales</taxon>
        <taxon>Vibrionaceae</taxon>
        <taxon>Vibrio</taxon>
    </lineage>
</organism>
<feature type="chain" id="PRO_1000198188" description="Trigger factor">
    <location>
        <begin position="1"/>
        <end position="432"/>
    </location>
</feature>
<feature type="domain" description="PPIase FKBP-type" evidence="1">
    <location>
        <begin position="161"/>
        <end position="246"/>
    </location>
</feature>
<dbReference type="EC" id="5.2.1.8" evidence="1"/>
<dbReference type="EMBL" id="FM954972">
    <property type="protein sequence ID" value="CAV19371.1"/>
    <property type="molecule type" value="Genomic_DNA"/>
</dbReference>
<dbReference type="SMR" id="B7VI01"/>
<dbReference type="STRING" id="575788.VS_2206"/>
<dbReference type="KEGG" id="vsp:VS_2206"/>
<dbReference type="eggNOG" id="COG0544">
    <property type="taxonomic scope" value="Bacteria"/>
</dbReference>
<dbReference type="HOGENOM" id="CLU_033058_2_0_6"/>
<dbReference type="Proteomes" id="UP000009100">
    <property type="component" value="Chromosome 1"/>
</dbReference>
<dbReference type="GO" id="GO:0005737">
    <property type="term" value="C:cytoplasm"/>
    <property type="evidence" value="ECO:0007669"/>
    <property type="project" value="UniProtKB-SubCell"/>
</dbReference>
<dbReference type="GO" id="GO:0003755">
    <property type="term" value="F:peptidyl-prolyl cis-trans isomerase activity"/>
    <property type="evidence" value="ECO:0007669"/>
    <property type="project" value="UniProtKB-UniRule"/>
</dbReference>
<dbReference type="GO" id="GO:0044183">
    <property type="term" value="F:protein folding chaperone"/>
    <property type="evidence" value="ECO:0007669"/>
    <property type="project" value="TreeGrafter"/>
</dbReference>
<dbReference type="GO" id="GO:0043022">
    <property type="term" value="F:ribosome binding"/>
    <property type="evidence" value="ECO:0007669"/>
    <property type="project" value="TreeGrafter"/>
</dbReference>
<dbReference type="GO" id="GO:0051083">
    <property type="term" value="P:'de novo' cotranslational protein folding"/>
    <property type="evidence" value="ECO:0007669"/>
    <property type="project" value="TreeGrafter"/>
</dbReference>
<dbReference type="GO" id="GO:0051301">
    <property type="term" value="P:cell division"/>
    <property type="evidence" value="ECO:0007669"/>
    <property type="project" value="UniProtKB-KW"/>
</dbReference>
<dbReference type="GO" id="GO:0061077">
    <property type="term" value="P:chaperone-mediated protein folding"/>
    <property type="evidence" value="ECO:0007669"/>
    <property type="project" value="TreeGrafter"/>
</dbReference>
<dbReference type="GO" id="GO:0015031">
    <property type="term" value="P:protein transport"/>
    <property type="evidence" value="ECO:0007669"/>
    <property type="project" value="UniProtKB-UniRule"/>
</dbReference>
<dbReference type="GO" id="GO:0043335">
    <property type="term" value="P:protein unfolding"/>
    <property type="evidence" value="ECO:0007669"/>
    <property type="project" value="TreeGrafter"/>
</dbReference>
<dbReference type="FunFam" id="3.10.50.40:FF:000001">
    <property type="entry name" value="Trigger factor"/>
    <property type="match status" value="1"/>
</dbReference>
<dbReference type="FunFam" id="3.30.70.1050:FF:000001">
    <property type="entry name" value="Trigger factor"/>
    <property type="match status" value="1"/>
</dbReference>
<dbReference type="Gene3D" id="3.10.50.40">
    <property type="match status" value="1"/>
</dbReference>
<dbReference type="Gene3D" id="3.30.70.1050">
    <property type="entry name" value="Trigger factor ribosome-binding domain"/>
    <property type="match status" value="1"/>
</dbReference>
<dbReference type="Gene3D" id="1.10.3120.10">
    <property type="entry name" value="Trigger factor, C-terminal domain"/>
    <property type="match status" value="1"/>
</dbReference>
<dbReference type="HAMAP" id="MF_00303">
    <property type="entry name" value="Trigger_factor_Tig"/>
    <property type="match status" value="1"/>
</dbReference>
<dbReference type="InterPro" id="IPR046357">
    <property type="entry name" value="PPIase_dom_sf"/>
</dbReference>
<dbReference type="InterPro" id="IPR001179">
    <property type="entry name" value="PPIase_FKBP_dom"/>
</dbReference>
<dbReference type="InterPro" id="IPR005215">
    <property type="entry name" value="Trig_fac"/>
</dbReference>
<dbReference type="InterPro" id="IPR008880">
    <property type="entry name" value="Trigger_fac_C"/>
</dbReference>
<dbReference type="InterPro" id="IPR037041">
    <property type="entry name" value="Trigger_fac_C_sf"/>
</dbReference>
<dbReference type="InterPro" id="IPR008881">
    <property type="entry name" value="Trigger_fac_ribosome-bd_bac"/>
</dbReference>
<dbReference type="InterPro" id="IPR036611">
    <property type="entry name" value="Trigger_fac_ribosome-bd_sf"/>
</dbReference>
<dbReference type="InterPro" id="IPR027304">
    <property type="entry name" value="Trigger_fact/SurA_dom_sf"/>
</dbReference>
<dbReference type="NCBIfam" id="TIGR00115">
    <property type="entry name" value="tig"/>
    <property type="match status" value="1"/>
</dbReference>
<dbReference type="PANTHER" id="PTHR30560">
    <property type="entry name" value="TRIGGER FACTOR CHAPERONE AND PEPTIDYL-PROLYL CIS/TRANS ISOMERASE"/>
    <property type="match status" value="1"/>
</dbReference>
<dbReference type="PANTHER" id="PTHR30560:SF3">
    <property type="entry name" value="TRIGGER FACTOR-LIKE PROTEIN TIG, CHLOROPLASTIC"/>
    <property type="match status" value="1"/>
</dbReference>
<dbReference type="Pfam" id="PF00254">
    <property type="entry name" value="FKBP_C"/>
    <property type="match status" value="1"/>
</dbReference>
<dbReference type="Pfam" id="PF05698">
    <property type="entry name" value="Trigger_C"/>
    <property type="match status" value="1"/>
</dbReference>
<dbReference type="Pfam" id="PF05697">
    <property type="entry name" value="Trigger_N"/>
    <property type="match status" value="1"/>
</dbReference>
<dbReference type="PIRSF" id="PIRSF003095">
    <property type="entry name" value="Trigger_factor"/>
    <property type="match status" value="1"/>
</dbReference>
<dbReference type="SUPFAM" id="SSF54534">
    <property type="entry name" value="FKBP-like"/>
    <property type="match status" value="1"/>
</dbReference>
<dbReference type="SUPFAM" id="SSF109998">
    <property type="entry name" value="Triger factor/SurA peptide-binding domain-like"/>
    <property type="match status" value="1"/>
</dbReference>
<dbReference type="SUPFAM" id="SSF102735">
    <property type="entry name" value="Trigger factor ribosome-binding domain"/>
    <property type="match status" value="1"/>
</dbReference>
<dbReference type="PROSITE" id="PS50059">
    <property type="entry name" value="FKBP_PPIASE"/>
    <property type="match status" value="1"/>
</dbReference>
<keyword id="KW-0131">Cell cycle</keyword>
<keyword id="KW-0132">Cell division</keyword>
<keyword id="KW-0143">Chaperone</keyword>
<keyword id="KW-0963">Cytoplasm</keyword>
<keyword id="KW-0413">Isomerase</keyword>
<keyword id="KW-0697">Rotamase</keyword>